<proteinExistence type="evidence at transcript level"/>
<feature type="chain" id="PRO_0000396395" description="Ubiquitin">
    <location>
        <begin position="1" status="less than"/>
        <end position="72"/>
    </location>
</feature>
<feature type="chain" id="PRO_0000396396" description="Ubiquitin">
    <location>
        <begin position="73"/>
        <end position="148"/>
    </location>
</feature>
<feature type="chain" id="PRO_0000396397" description="Ubiquitin">
    <location>
        <begin position="149"/>
        <end position="224"/>
    </location>
</feature>
<feature type="chain" id="PRO_0000396398" description="Ubiquitin">
    <location>
        <begin position="225"/>
        <end position="300"/>
    </location>
</feature>
<feature type="chain" id="PRO_0000396399" description="Ubiquitin">
    <location>
        <begin position="301"/>
        <end position="376"/>
    </location>
</feature>
<feature type="propeptide" id="PRO_0000396400">
    <location>
        <position position="377"/>
    </location>
</feature>
<feature type="domain" description="Ubiquitin-like 1" evidence="2">
    <location>
        <begin position="1" status="less than"/>
        <end position="72"/>
    </location>
</feature>
<feature type="domain" description="Ubiquitin-like 2" evidence="2">
    <location>
        <begin position="73"/>
        <end position="148"/>
    </location>
</feature>
<feature type="domain" description="Ubiquitin-like 3" evidence="2">
    <location>
        <begin position="149"/>
        <end position="224"/>
    </location>
</feature>
<feature type="domain" description="Ubiquitin-like 4" evidence="2">
    <location>
        <begin position="225"/>
        <end position="300"/>
    </location>
</feature>
<feature type="domain" description="Ubiquitin-like 5" evidence="2">
    <location>
        <begin position="301"/>
        <end position="376"/>
    </location>
</feature>
<feature type="cross-link" description="Glycyl lysine isopeptide (Lys-Gly) (interchain with G-Cter in ubiquitin)" evidence="1">
    <location>
        <position position="120"/>
    </location>
</feature>
<feature type="cross-link" description="Glycyl lysine isopeptide (Gly-Lys) (interchain with K-? in acceptor proteins)" evidence="2">
    <location>
        <position position="148"/>
    </location>
</feature>
<feature type="non-terminal residue">
    <location>
        <position position="1"/>
    </location>
</feature>
<accession>P0CG84</accession>
<accession>O82079</accession>
<accession>P03993</accession>
<accession>P69320</accession>
<reference key="1">
    <citation type="journal article" date="1992" name="Plant Mol. Biol.">
        <title>Ubiquitin genes are differentially regulated in protoplast-derived cultures of Nicotiana sylvestris and in response to various stresses.</title>
        <authorList>
            <person name="Genschik P."/>
            <person name="Parmentier Y."/>
            <person name="Durr A."/>
            <person name="Marbach J."/>
            <person name="Criqui M.-C."/>
            <person name="Jamet E."/>
            <person name="Fleck J."/>
        </authorList>
    </citation>
    <scope>NUCLEOTIDE SEQUENCE [MRNA]</scope>
    <source>
        <tissue>Leaf</tissue>
    </source>
</reference>
<dbReference type="EMBL" id="M74156">
    <property type="protein sequence ID" value="AAA34124.1"/>
    <property type="molecule type" value="mRNA"/>
</dbReference>
<dbReference type="SMR" id="P0CG84"/>
<dbReference type="STRING" id="4096.P0CG84"/>
<dbReference type="Proteomes" id="UP000189701">
    <property type="component" value="Unplaced"/>
</dbReference>
<dbReference type="GO" id="GO:0005737">
    <property type="term" value="C:cytoplasm"/>
    <property type="evidence" value="ECO:0007669"/>
    <property type="project" value="UniProtKB-SubCell"/>
</dbReference>
<dbReference type="GO" id="GO:0005634">
    <property type="term" value="C:nucleus"/>
    <property type="evidence" value="ECO:0007669"/>
    <property type="project" value="UniProtKB-SubCell"/>
</dbReference>
<dbReference type="GO" id="GO:0003729">
    <property type="term" value="F:mRNA binding"/>
    <property type="evidence" value="ECO:0007669"/>
    <property type="project" value="UniProtKB-ARBA"/>
</dbReference>
<dbReference type="CDD" id="cd01803">
    <property type="entry name" value="Ubl_ubiquitin"/>
    <property type="match status" value="5"/>
</dbReference>
<dbReference type="FunFam" id="3.10.20.90:FF:000016">
    <property type="entry name" value="Polyubiquitin 3"/>
    <property type="match status" value="4"/>
</dbReference>
<dbReference type="FunFam" id="3.10.20.90:FF:000014">
    <property type="entry name" value="Ubiquitin-60S ribosomal L40 fusion"/>
    <property type="match status" value="1"/>
</dbReference>
<dbReference type="Gene3D" id="3.10.20.90">
    <property type="entry name" value="Phosphatidylinositol 3-kinase Catalytic Subunit, Chain A, domain 1"/>
    <property type="match status" value="5"/>
</dbReference>
<dbReference type="InterPro" id="IPR000626">
    <property type="entry name" value="Ubiquitin-like_dom"/>
</dbReference>
<dbReference type="InterPro" id="IPR029071">
    <property type="entry name" value="Ubiquitin-like_domsf"/>
</dbReference>
<dbReference type="InterPro" id="IPR019954">
    <property type="entry name" value="Ubiquitin_CS"/>
</dbReference>
<dbReference type="InterPro" id="IPR019956">
    <property type="entry name" value="Ubiquitin_dom"/>
</dbReference>
<dbReference type="InterPro" id="IPR050158">
    <property type="entry name" value="Ubiquitin_ubiquitin-like"/>
</dbReference>
<dbReference type="PANTHER" id="PTHR10666">
    <property type="entry name" value="UBIQUITIN"/>
    <property type="match status" value="1"/>
</dbReference>
<dbReference type="Pfam" id="PF00240">
    <property type="entry name" value="ubiquitin"/>
    <property type="match status" value="5"/>
</dbReference>
<dbReference type="PRINTS" id="PR00348">
    <property type="entry name" value="UBIQUITIN"/>
</dbReference>
<dbReference type="SMART" id="SM00213">
    <property type="entry name" value="UBQ"/>
    <property type="match status" value="5"/>
</dbReference>
<dbReference type="SUPFAM" id="SSF54236">
    <property type="entry name" value="Ubiquitin-like"/>
    <property type="match status" value="5"/>
</dbReference>
<dbReference type="PROSITE" id="PS00299">
    <property type="entry name" value="UBIQUITIN_1"/>
    <property type="match status" value="5"/>
</dbReference>
<dbReference type="PROSITE" id="PS50053">
    <property type="entry name" value="UBIQUITIN_2"/>
    <property type="match status" value="5"/>
</dbReference>
<gene>
    <name type="primary">UBI4</name>
</gene>
<sequence length="377" mass="42179">VKTLTGKTITLEVESSDTIDNVKAKIQDKEGIPPDQQRLIFAGKQLEDGRTLADYNIQKESTLHLVLRLRGGMQIFVKTLTGKTITLEVESSDTIDNVKAKIQDKEGIPPDQQRLIFAGKQLEDGRTLADYNIQKESTLHLVLRLRGGMQIFVKTLTGKTITLEVESSDTIDNVKAKIQDKEGIPPDQQRLIFAGKQLEDGRTLADYNIQKESTLHLVLRLRGGMQIFVKTLTGKTITLEVESSDTIDNVKAKIQDKEGIPPDQQRLIFAGKQLEDGRTLADYNIQKESTLHLVLRLRGGMQIFVKTLTGKTITLEVESSDTIDNVKAKIQDKEGIPPDQQRLIFAGKQLEDGRTLADYNIQKESTLHLVLRLRGGF</sequence>
<protein>
    <recommendedName>
        <fullName>Polyubiquitin</fullName>
    </recommendedName>
    <component>
        <recommendedName>
            <fullName>Ubiquitin</fullName>
        </recommendedName>
    </component>
</protein>
<name>UBI4P_NICSY</name>
<keyword id="KW-0963">Cytoplasm</keyword>
<keyword id="KW-1017">Isopeptide bond</keyword>
<keyword id="KW-0539">Nucleus</keyword>
<keyword id="KW-1185">Reference proteome</keyword>
<keyword id="KW-0677">Repeat</keyword>
<keyword id="KW-0832">Ubl conjugation</keyword>
<evidence type="ECO:0000250" key="1"/>
<evidence type="ECO:0000255" key="2">
    <source>
        <dbReference type="PROSITE-ProRule" id="PRU00214"/>
    </source>
</evidence>
<evidence type="ECO:0000305" key="3"/>
<comment type="function">
    <text evidence="1">Ubiquitin exists either covalently attached to another protein, or free (unanchored). When covalently bound, it is conjugated to target proteins via an isopeptide bond either as a monomer (monoubiquitin), a polymer linked via different Lys residues of the ubiquitin (polyubiquitin chains) or a linear polymer linked via the initiator Met of the ubiquitin (linear polyubiquitin chains). Polyubiquitin chains, when attached to a target protein, have different functions depending on the Lys residue of the ubiquitin that is linked: Lys-6-linked may be involved in DNA repair; Lys-11-linked is involved in ERAD (endoplasmic reticulum-associated degradation) and in cell-cycle regulation; Lys-29-linked is involved in lysosomal degradation; Lys-33-linked is involved in kinase modification; Lys-48-linked is involved in protein degradation via the proteasome; Lys-63-linked is involved in endocytosis, DNA-damage responses as well as in signaling processes leading to activation of the transcription factor NF-kappa-B. Linear polymer chains formed via attachment by the initiator Met lead to cell signaling. Ubiquitin is usually conjugated to Lys residues of target proteins, however, in rare cases, conjugation to Cys or Ser residues has been observed. When polyubiquitin is free (unanchored-polyubiquitin), it also has distinct roles, such as in activation of protein kinases, and in signaling (By similarity).</text>
</comment>
<comment type="subcellular location">
    <subcellularLocation>
        <location evidence="1">Cytoplasm</location>
    </subcellularLocation>
    <subcellularLocation>
        <location evidence="1">Nucleus</location>
    </subcellularLocation>
</comment>
<comment type="miscellaneous">
    <text>Ubiquitin is generally synthesized as a polyubiquitin precursor with tandem head to tail repeats. Often, there is one to three additional amino acids after the last repeat, removed in the mature protein. Alternatively, ubiquitin extension protein is synthesized as a single copy of ubiquitin fused to a ribosomal protein (either L40 or S27A) or to an ubiquitin-related protein (either RUB1 or RUB2). Following translation, extension protein is cleaved from ubiquitin.</text>
</comment>
<comment type="miscellaneous">
    <text>For the sake of clarity sequence features are annotated only for the first chain, and are not repeated for each of the following chains.</text>
</comment>
<comment type="similarity">
    <text evidence="3">Belongs to the ubiquitin family.</text>
</comment>
<organism>
    <name type="scientific">Nicotiana sylvestris</name>
    <name type="common">Wood tobacco</name>
    <name type="synonym">South American tobacco</name>
    <dbReference type="NCBI Taxonomy" id="4096"/>
    <lineage>
        <taxon>Eukaryota</taxon>
        <taxon>Viridiplantae</taxon>
        <taxon>Streptophyta</taxon>
        <taxon>Embryophyta</taxon>
        <taxon>Tracheophyta</taxon>
        <taxon>Spermatophyta</taxon>
        <taxon>Magnoliopsida</taxon>
        <taxon>eudicotyledons</taxon>
        <taxon>Gunneridae</taxon>
        <taxon>Pentapetalae</taxon>
        <taxon>asterids</taxon>
        <taxon>lamiids</taxon>
        <taxon>Solanales</taxon>
        <taxon>Solanaceae</taxon>
        <taxon>Nicotianoideae</taxon>
        <taxon>Nicotianeae</taxon>
        <taxon>Nicotiana</taxon>
    </lineage>
</organism>